<feature type="chain" id="PRO_0000137415" description="Eukaryotic translation initiation factor 2 subunit beta">
    <location>
        <begin position="1"/>
        <end position="285"/>
    </location>
</feature>
<feature type="zinc finger region" description="C4-type" evidence="2">
    <location>
        <begin position="236"/>
        <end position="262"/>
    </location>
</feature>
<feature type="region of interest" description="Disordered" evidence="3">
    <location>
        <begin position="30"/>
        <end position="69"/>
    </location>
</feature>
<feature type="modified residue" description="Phosphoserine" evidence="10 11 12">
    <location>
        <position position="40"/>
    </location>
</feature>
<feature type="modified residue" description="Phosphothreonine" evidence="11">
    <location>
        <position position="69"/>
    </location>
</feature>
<feature type="modified residue" description="Phosphoserine" evidence="11 12">
    <location>
        <position position="80"/>
    </location>
</feature>
<feature type="modified residue" description="Phosphoserine" evidence="12">
    <location>
        <position position="92"/>
    </location>
</feature>
<feature type="modified residue" description="Phosphoserine" evidence="10 11 12">
    <location>
        <position position="112"/>
    </location>
</feature>
<feature type="modified residue" description="Phosphothreonine" evidence="12">
    <location>
        <position position="116"/>
    </location>
</feature>
<feature type="modified residue" description="Phosphoserine" evidence="12">
    <location>
        <position position="118"/>
    </location>
</feature>
<feature type="mutagenesis site" description="Abolishes interaction with TIF5; when associated with 49-K--K-56 and 82-K--K-89." evidence="4">
    <original>KKKKKTKK</original>
    <variation>AAAAATAA</variation>
    <location>
        <begin position="16"/>
        <end position="23"/>
    </location>
</feature>
<feature type="mutagenesis site" description="Abolishes interaction with TIF5; when associated with 16-K--K-23 and 82-K--K-89." evidence="4">
    <original>KKKKKKSK</original>
    <variation>AAAAAASA</variation>
    <location>
        <begin position="49"/>
        <end position="56"/>
    </location>
</feature>
<feature type="mutagenesis site" description="Abolishes interaction with TIF5; when associated with 16-K--K-23 and 49-K--K-56." evidence="4">
    <original>KKKKKKTK</original>
    <variation>AAAAAATA</variation>
    <location>
        <begin position="82"/>
        <end position="89"/>
    </location>
</feature>
<feature type="mutagenesis site" description="Abolishes binding to the eIF2 complex alpha subunit GCD11." evidence="7">
    <original>YS</original>
    <variation>AA</variation>
    <location>
        <begin position="131"/>
        <end position="132"/>
    </location>
</feature>
<feature type="mutagenesis site" description="Abolishes binding to the eIF2 complex alpha subunit GCD11." evidence="7">
    <original>LL</original>
    <variation>RR</variation>
    <location>
        <begin position="134"/>
        <end position="135"/>
    </location>
</feature>
<feature type="sequence conflict" description="In Ref. 4; AAT92949." evidence="9" ref="4">
    <original>I</original>
    <variation>T</variation>
    <location>
        <position position="141"/>
    </location>
</feature>
<feature type="helix" evidence="13">
    <location>
        <begin position="129"/>
        <end position="140"/>
    </location>
</feature>
<feature type="strand" evidence="13">
    <location>
        <begin position="165"/>
        <end position="168"/>
    </location>
</feature>
<feature type="strand" evidence="13">
    <location>
        <begin position="171"/>
        <end position="175"/>
    </location>
</feature>
<feature type="helix" evidence="13">
    <location>
        <begin position="177"/>
        <end position="183"/>
    </location>
</feature>
<feature type="helix" evidence="13">
    <location>
        <begin position="188"/>
        <end position="198"/>
    </location>
</feature>
<feature type="strand" evidence="13">
    <location>
        <begin position="204"/>
        <end position="206"/>
    </location>
</feature>
<feature type="strand" evidence="13">
    <location>
        <begin position="210"/>
        <end position="215"/>
    </location>
</feature>
<feature type="helix" evidence="13">
    <location>
        <begin position="219"/>
        <end position="232"/>
    </location>
</feature>
<feature type="strand" evidence="13">
    <location>
        <begin position="237"/>
        <end position="239"/>
    </location>
</feature>
<feature type="strand" evidence="13">
    <location>
        <begin position="260"/>
        <end position="262"/>
    </location>
</feature>
<comment type="function">
    <text>Component of the eIF2 complex that functions in the early steps of protein synthesis by forming a ternary complex with GTP and initiator tRNA. This complex binds to a 40S ribosomal subunit, followed by mRNA binding to form a 43S pre-initiation complex (43S PIC). Junction of the 60S ribosomal subunit to form the 80S initiation complex is preceded by hydrolysis of the GTP bound to eIF2 and release of an eIF2-GDP binary complex. In order for eIF2 to recycle and catalyze another round of initiation, the GDP bound to eIF2 must exchange with GTP by way of a reaction catalyzed by eIF2B.</text>
</comment>
<comment type="subunit">
    <text evidence="4 5 6 7 8 9">Eukaryotic translation initiation factor 2 eIF2 is a heterotrimeric complex composed of an alpha, a beta and a gamma subunit (PubMed:23775072, PubMed:30517694, PubMed:35031321). The factors eIF-1, eIF-2, eIF-3, TIF5/eIF-5 and methionyl-tRNAi form a multifactor complex (MFC) that may bind to the 40S ribosome (Probable). Interacts with GCD6 (PubMed:10075937). Interacts with GCD1 (PubMed:23775072). Interacts with TIF5/eIF-5 (PubMed:10075937, PubMed:35031321). Interacts with CDC123 (PubMed:35031321, PubMed:37507029).</text>
</comment>
<comment type="interaction">
    <interactant intactId="EBI-8920">
        <id>P09064</id>
    </interactant>
    <interactant intactId="EBI-6275">
        <id>P09032</id>
        <label>GCD1</label>
    </interactant>
    <organismsDiffer>false</organismsDiffer>
    <experiments>4</experiments>
</comment>
<comment type="interaction">
    <interactant intactId="EBI-8920">
        <id>P09064</id>
    </interactant>
    <interactant intactId="EBI-8924">
        <id>P32481</id>
        <label>GCD11</label>
    </interactant>
    <organismsDiffer>false</organismsDiffer>
    <experiments>6</experiments>
</comment>
<comment type="interaction">
    <interactant intactId="EBI-8920">
        <id>P09064</id>
    </interactant>
    <interactant intactId="EBI-6253">
        <id>P14741</id>
        <label>GCN3</label>
    </interactant>
    <organismsDiffer>false</organismsDiffer>
    <experiments>2</experiments>
</comment>
<comment type="subcellular location">
    <subcellularLocation>
        <location evidence="1">Cytoplasm</location>
        <location evidence="1">Cytosol</location>
    </subcellularLocation>
</comment>
<comment type="similarity">
    <text evidence="9">Belongs to the eIF-2-beta/eIF-5 family.</text>
</comment>
<proteinExistence type="evidence at protein level"/>
<keyword id="KW-0002">3D-structure</keyword>
<keyword id="KW-0963">Cytoplasm</keyword>
<keyword id="KW-0396">Initiation factor</keyword>
<keyword id="KW-0479">Metal-binding</keyword>
<keyword id="KW-0597">Phosphoprotein</keyword>
<keyword id="KW-0648">Protein biosynthesis</keyword>
<keyword id="KW-1185">Reference proteome</keyword>
<keyword id="KW-0862">Zinc</keyword>
<keyword id="KW-0863">Zinc-finger</keyword>
<reference key="1">
    <citation type="journal article" date="1988" name="Cell">
        <title>Mutations at a Zn(II) finger motif in the yeast eIF-2 beta gene alter ribosomal start-site selection during the scanning process.</title>
        <authorList>
            <person name="Donahue T.F."/>
            <person name="Cigan A.M."/>
            <person name="Pabich E.K."/>
            <person name="Valavicius B.C."/>
        </authorList>
    </citation>
    <scope>NUCLEOTIDE SEQUENCE [GENOMIC DNA]</scope>
</reference>
<reference key="2">
    <citation type="journal article" date="1997" name="Nature">
        <title>The nucleotide sequence of Saccharomyces cerevisiae chromosome XVI.</title>
        <authorList>
            <person name="Bussey H."/>
            <person name="Storms R.K."/>
            <person name="Ahmed A."/>
            <person name="Albermann K."/>
            <person name="Allen E."/>
            <person name="Ansorge W."/>
            <person name="Araujo R."/>
            <person name="Aparicio A."/>
            <person name="Barrell B.G."/>
            <person name="Badcock K."/>
            <person name="Benes V."/>
            <person name="Botstein D."/>
            <person name="Bowman S."/>
            <person name="Brueckner M."/>
            <person name="Carpenter J."/>
            <person name="Cherry J.M."/>
            <person name="Chung E."/>
            <person name="Churcher C.M."/>
            <person name="Coster F."/>
            <person name="Davis K."/>
            <person name="Davis R.W."/>
            <person name="Dietrich F.S."/>
            <person name="Delius H."/>
            <person name="DiPaolo T."/>
            <person name="Dubois E."/>
            <person name="Duesterhoeft A."/>
            <person name="Duncan M."/>
            <person name="Floeth M."/>
            <person name="Fortin N."/>
            <person name="Friesen J.D."/>
            <person name="Fritz C."/>
            <person name="Goffeau A."/>
            <person name="Hall J."/>
            <person name="Hebling U."/>
            <person name="Heumann K."/>
            <person name="Hilbert H."/>
            <person name="Hillier L.W."/>
            <person name="Hunicke-Smith S."/>
            <person name="Hyman R.W."/>
            <person name="Johnston M."/>
            <person name="Kalman S."/>
            <person name="Kleine K."/>
            <person name="Komp C."/>
            <person name="Kurdi O."/>
            <person name="Lashkari D."/>
            <person name="Lew H."/>
            <person name="Lin A."/>
            <person name="Lin D."/>
            <person name="Louis E.J."/>
            <person name="Marathe R."/>
            <person name="Messenguy F."/>
            <person name="Mewes H.-W."/>
            <person name="Mirtipati S."/>
            <person name="Moestl D."/>
            <person name="Mueller-Auer S."/>
            <person name="Namath A."/>
            <person name="Nentwich U."/>
            <person name="Oefner P."/>
            <person name="Pearson D."/>
            <person name="Petel F.X."/>
            <person name="Pohl T.M."/>
            <person name="Purnelle B."/>
            <person name="Rajandream M.A."/>
            <person name="Rechmann S."/>
            <person name="Rieger M."/>
            <person name="Riles L."/>
            <person name="Roberts D."/>
            <person name="Schaefer M."/>
            <person name="Scharfe M."/>
            <person name="Scherens B."/>
            <person name="Schramm S."/>
            <person name="Schroeder M."/>
            <person name="Sdicu A.-M."/>
            <person name="Tettelin H."/>
            <person name="Urrestarazu L.A."/>
            <person name="Ushinsky S."/>
            <person name="Vierendeels F."/>
            <person name="Vissers S."/>
            <person name="Voss H."/>
            <person name="Walsh S.V."/>
            <person name="Wambutt R."/>
            <person name="Wang Y."/>
            <person name="Wedler E."/>
            <person name="Wedler H."/>
            <person name="Winnett E."/>
            <person name="Zhong W.-W."/>
            <person name="Zollner A."/>
            <person name="Vo D.H."/>
            <person name="Hani J."/>
        </authorList>
    </citation>
    <scope>NUCLEOTIDE SEQUENCE [LARGE SCALE GENOMIC DNA]</scope>
    <source>
        <strain>ATCC 204508 / S288c</strain>
    </source>
</reference>
<reference key="3">
    <citation type="journal article" date="2014" name="G3 (Bethesda)">
        <title>The reference genome sequence of Saccharomyces cerevisiae: Then and now.</title>
        <authorList>
            <person name="Engel S.R."/>
            <person name="Dietrich F.S."/>
            <person name="Fisk D.G."/>
            <person name="Binkley G."/>
            <person name="Balakrishnan R."/>
            <person name="Costanzo M.C."/>
            <person name="Dwight S.S."/>
            <person name="Hitz B.C."/>
            <person name="Karra K."/>
            <person name="Nash R.S."/>
            <person name="Weng S."/>
            <person name="Wong E.D."/>
            <person name="Lloyd P."/>
            <person name="Skrzypek M.S."/>
            <person name="Miyasato S.R."/>
            <person name="Simison M."/>
            <person name="Cherry J.M."/>
        </authorList>
    </citation>
    <scope>GENOME REANNOTATION</scope>
    <source>
        <strain>ATCC 204508 / S288c</strain>
    </source>
</reference>
<reference key="4">
    <citation type="journal article" date="2007" name="Genome Res.">
        <title>Approaching a complete repository of sequence-verified protein-encoding clones for Saccharomyces cerevisiae.</title>
        <authorList>
            <person name="Hu Y."/>
            <person name="Rolfs A."/>
            <person name="Bhullar B."/>
            <person name="Murthy T.V.S."/>
            <person name="Zhu C."/>
            <person name="Berger M.F."/>
            <person name="Camargo A.A."/>
            <person name="Kelley F."/>
            <person name="McCarron S."/>
            <person name="Jepson D."/>
            <person name="Richardson A."/>
            <person name="Raphael J."/>
            <person name="Moreira D."/>
            <person name="Taycher E."/>
            <person name="Zuo D."/>
            <person name="Mohr S."/>
            <person name="Kane M.F."/>
            <person name="Williamson J."/>
            <person name="Simpson A.J.G."/>
            <person name="Bulyk M.L."/>
            <person name="Harlow E."/>
            <person name="Marsischky G."/>
            <person name="Kolodner R.D."/>
            <person name="LaBaer J."/>
        </authorList>
    </citation>
    <scope>NUCLEOTIDE SEQUENCE [GENOMIC DNA]</scope>
    <source>
        <strain>ATCC 204508 / S288c</strain>
    </source>
</reference>
<reference key="5">
    <citation type="journal article" date="1999" name="EMBO J.">
        <title>Conserved bipartite motifs in yeast eIF5 and eIF2Bepsilon, GTPase-activating and GDP-GTP exchange factors in translation initiation, mediate binding to their common substrate eIF2.</title>
        <authorList>
            <person name="Asano K."/>
            <person name="Krishnamoorthy T."/>
            <person name="Phan L."/>
            <person name="Pavitt G.D."/>
            <person name="Hinnebusch A.G."/>
        </authorList>
    </citation>
    <scope>INTERACTION WITH GCD6 AND TIF5</scope>
    <scope>MUTAGENESIS OF 16-LYS--LYS-23; 49-LYS--LYS-56 AND 82-LYS--LYS-89</scope>
</reference>
<reference key="6">
    <citation type="journal article" date="2007" name="J. Proteome Res.">
        <title>Large-scale phosphorylation analysis of alpha-factor-arrested Saccharomyces cerevisiae.</title>
        <authorList>
            <person name="Li X."/>
            <person name="Gerber S.A."/>
            <person name="Rudner A.D."/>
            <person name="Beausoleil S.A."/>
            <person name="Haas W."/>
            <person name="Villen J."/>
            <person name="Elias J.E."/>
            <person name="Gygi S.P."/>
        </authorList>
    </citation>
    <scope>PHOSPHORYLATION [LARGE SCALE ANALYSIS] AT SER-40 AND SER-112</scope>
    <scope>IDENTIFICATION BY MASS SPECTROMETRY [LARGE SCALE ANALYSIS]</scope>
    <source>
        <strain>ADR376</strain>
    </source>
</reference>
<reference key="7">
    <citation type="journal article" date="2008" name="Mol. Cell. Proteomics">
        <title>A multidimensional chromatography technology for in-depth phosphoproteome analysis.</title>
        <authorList>
            <person name="Albuquerque C.P."/>
            <person name="Smolka M.B."/>
            <person name="Payne S.H."/>
            <person name="Bafna V."/>
            <person name="Eng J."/>
            <person name="Zhou H."/>
        </authorList>
    </citation>
    <scope>PHOSPHORYLATION [LARGE SCALE ANALYSIS] AT SER-40; THR-69; SER-80 AND SER-112</scope>
    <scope>IDENTIFICATION BY MASS SPECTROMETRY [LARGE SCALE ANALYSIS]</scope>
</reference>
<reference key="8">
    <citation type="journal article" date="2009" name="Science">
        <title>Global analysis of Cdk1 substrate phosphorylation sites provides insights into evolution.</title>
        <authorList>
            <person name="Holt L.J."/>
            <person name="Tuch B.B."/>
            <person name="Villen J."/>
            <person name="Johnson A.D."/>
            <person name="Gygi S.P."/>
            <person name="Morgan D.O."/>
        </authorList>
    </citation>
    <scope>PHOSPHORYLATION [LARGE SCALE ANALYSIS] AT SER-40; SER-80; SER-92; SER-112; THR-116 AND SER-118</scope>
    <scope>IDENTIFICATION BY MASS SPECTROMETRY [LARGE SCALE ANALYSIS]</scope>
</reference>
<reference key="9">
    <citation type="journal article" date="2013" name="J. Biol. Chem.">
        <title>Translation initiation requires cell division cycle 123 (Cdc123) to facilitate biogenesis of the eukaryotic initiation factor 2 (eIF2).</title>
        <authorList>
            <person name="Perzlmaier A.F."/>
            <person name="Richter F."/>
            <person name="Seufert W."/>
        </authorList>
    </citation>
    <scope>IDENTIFICATION IN THE EIF2 COMPLEX</scope>
    <scope>INTERACTION WITH GCD1</scope>
</reference>
<reference key="10">
    <citation type="journal article" date="2019" name="Nucleic Acids Res.">
        <title>MEHMO syndrome mutation EIF2S3-I259M impairs initiator Met-tRNAiMet binding to eukaryotic translation initiation factor eIF2.</title>
        <authorList>
            <person name="Young-Baird S.K."/>
            <person name="Shin B.S."/>
            <person name="Dever T.E."/>
        </authorList>
    </citation>
    <scope>IDENTIFICATION IN THE EIF2 COMPLEX</scope>
</reference>
<reference key="11">
    <citation type="journal article" date="2022" name="J. Biol. Chem.">
        <title>Stepwise assembly of the eukaryotic translation initiation factor 2 complex.</title>
        <authorList>
            <person name="Vanselow S."/>
            <person name="Neumann-Arnold L."/>
            <person name="Wojciech-Moock F."/>
            <person name="Seufert W."/>
        </authorList>
    </citation>
    <scope>IDENTIFICATION IN THE EIF2 COMPLEX</scope>
    <scope>INTERACTION WITH CDC123 AND TIF5</scope>
    <scope>MUTAGENESIS OF 131-TYR-SER-132 AND 134-LEU-LEU-135</scope>
</reference>
<reference key="12">
    <citation type="journal article" date="2023" name="J. Struct. Biol.">
        <title>Binding of human Cdc123 to eIF2gamma.</title>
        <authorList>
            <person name="Cardenal Peralta C."/>
            <person name="Vandroux P."/>
            <person name="Neumann-Arnold L."/>
            <person name="Panvert M."/>
            <person name="Fagart J."/>
            <person name="Seufert W."/>
            <person name="Mechulam Y."/>
            <person name="Schmitt E."/>
        </authorList>
    </citation>
    <scope>INTERACTION WITH CDC123</scope>
</reference>
<dbReference type="EMBL" id="M21813">
    <property type="protein sequence ID" value="AAA34589.1"/>
    <property type="molecule type" value="Genomic_DNA"/>
</dbReference>
<dbReference type="EMBL" id="Z67751">
    <property type="protein sequence ID" value="CAA91607.1"/>
    <property type="molecule type" value="Genomic_DNA"/>
</dbReference>
<dbReference type="EMBL" id="Z73594">
    <property type="protein sequence ID" value="CAA97959.1"/>
    <property type="molecule type" value="Genomic_DNA"/>
</dbReference>
<dbReference type="EMBL" id="AY692930">
    <property type="protein sequence ID" value="AAT92949.1"/>
    <property type="molecule type" value="Genomic_DNA"/>
</dbReference>
<dbReference type="EMBL" id="BK006949">
    <property type="protein sequence ID" value="DAA11199.1"/>
    <property type="molecule type" value="Genomic_DNA"/>
</dbReference>
<dbReference type="PIR" id="S29368">
    <property type="entry name" value="S29368"/>
</dbReference>
<dbReference type="RefSeq" id="NP_015087.1">
    <property type="nucleotide sequence ID" value="NM_001184051.1"/>
</dbReference>
<dbReference type="PDB" id="3J81">
    <property type="method" value="EM"/>
    <property type="resolution" value="4.00 A"/>
    <property type="chains" value="l=1-285"/>
</dbReference>
<dbReference type="PDB" id="3JAP">
    <property type="method" value="EM"/>
    <property type="resolution" value="4.90 A"/>
    <property type="chains" value="l=1-285"/>
</dbReference>
<dbReference type="PDB" id="6FYX">
    <property type="method" value="EM"/>
    <property type="resolution" value="3.05 A"/>
    <property type="chains" value="l=1-285"/>
</dbReference>
<dbReference type="PDB" id="6FYY">
    <property type="method" value="EM"/>
    <property type="resolution" value="3.05 A"/>
    <property type="chains" value="l=1-285"/>
</dbReference>
<dbReference type="PDB" id="6GSM">
    <property type="method" value="EM"/>
    <property type="resolution" value="5.15 A"/>
    <property type="chains" value="l=127-270"/>
</dbReference>
<dbReference type="PDB" id="6GSN">
    <property type="method" value="EM"/>
    <property type="resolution" value="5.75 A"/>
    <property type="chains" value="l=127-270"/>
</dbReference>
<dbReference type="PDB" id="6I3M">
    <property type="method" value="EM"/>
    <property type="resolution" value="3.93 A"/>
    <property type="chains" value="M/N=1-285"/>
</dbReference>
<dbReference type="PDB" id="6I7T">
    <property type="method" value="EM"/>
    <property type="resolution" value="4.61 A"/>
    <property type="chains" value="M/N=1-285"/>
</dbReference>
<dbReference type="PDB" id="6QG0">
    <property type="method" value="EM"/>
    <property type="resolution" value="4.20 A"/>
    <property type="chains" value="O/P=1-285"/>
</dbReference>
<dbReference type="PDB" id="6QG1">
    <property type="method" value="EM"/>
    <property type="resolution" value="4.20 A"/>
    <property type="chains" value="O/P=1-285"/>
</dbReference>
<dbReference type="PDB" id="6QG2">
    <property type="method" value="EM"/>
    <property type="resolution" value="4.60 A"/>
    <property type="chains" value="O/P=1-285"/>
</dbReference>
<dbReference type="PDB" id="6QG3">
    <property type="method" value="EM"/>
    <property type="resolution" value="9.40 A"/>
    <property type="chains" value="O/P=1-285"/>
</dbReference>
<dbReference type="PDB" id="6QG5">
    <property type="method" value="EM"/>
    <property type="resolution" value="10.10 A"/>
    <property type="chains" value="O/P=1-285"/>
</dbReference>
<dbReference type="PDB" id="6QG6">
    <property type="method" value="EM"/>
    <property type="resolution" value="4.65 A"/>
    <property type="chains" value="O/P=1-285"/>
</dbReference>
<dbReference type="PDB" id="8CAS">
    <property type="method" value="EM"/>
    <property type="resolution" value="3.30 A"/>
    <property type="chains" value="s=1-285"/>
</dbReference>
<dbReference type="PDB" id="8RW1">
    <property type="method" value="EM"/>
    <property type="resolution" value="3.35 A"/>
    <property type="chains" value="l=1-285"/>
</dbReference>
<dbReference type="PDB" id="8S8D">
    <property type="method" value="EM"/>
    <property type="resolution" value="3.45 A"/>
    <property type="chains" value="l=1-285"/>
</dbReference>
<dbReference type="PDB" id="8S8E">
    <property type="method" value="EM"/>
    <property type="resolution" value="3.85 A"/>
    <property type="chains" value="l=1-285"/>
</dbReference>
<dbReference type="PDB" id="8S8F">
    <property type="method" value="EM"/>
    <property type="resolution" value="3.95 A"/>
    <property type="chains" value="l=1-285"/>
</dbReference>
<dbReference type="PDB" id="8S8G">
    <property type="method" value="EM"/>
    <property type="resolution" value="4.00 A"/>
    <property type="chains" value="l=1-285"/>
</dbReference>
<dbReference type="PDB" id="8S8H">
    <property type="method" value="EM"/>
    <property type="resolution" value="4.00 A"/>
    <property type="chains" value="l=1-285"/>
</dbReference>
<dbReference type="PDB" id="8S8I">
    <property type="method" value="EM"/>
    <property type="resolution" value="4.30 A"/>
    <property type="chains" value="l=1-285"/>
</dbReference>
<dbReference type="PDB" id="8S8J">
    <property type="method" value="EM"/>
    <property type="resolution" value="4.70 A"/>
    <property type="chains" value="l=1-285"/>
</dbReference>
<dbReference type="PDB" id="8S8K">
    <property type="method" value="EM"/>
    <property type="resolution" value="4.00 A"/>
    <property type="chains" value="l=1-270"/>
</dbReference>
<dbReference type="PDBsum" id="3J81"/>
<dbReference type="PDBsum" id="3JAP"/>
<dbReference type="PDBsum" id="6FYX"/>
<dbReference type="PDBsum" id="6FYY"/>
<dbReference type="PDBsum" id="6GSM"/>
<dbReference type="PDBsum" id="6GSN"/>
<dbReference type="PDBsum" id="6I3M"/>
<dbReference type="PDBsum" id="6I7T"/>
<dbReference type="PDBsum" id="6QG0"/>
<dbReference type="PDBsum" id="6QG1"/>
<dbReference type="PDBsum" id="6QG2"/>
<dbReference type="PDBsum" id="6QG3"/>
<dbReference type="PDBsum" id="6QG5"/>
<dbReference type="PDBsum" id="6QG6"/>
<dbReference type="PDBsum" id="8CAS"/>
<dbReference type="PDBsum" id="8RW1"/>
<dbReference type="PDBsum" id="8S8D"/>
<dbReference type="PDBsum" id="8S8E"/>
<dbReference type="PDBsum" id="8S8F"/>
<dbReference type="PDBsum" id="8S8G"/>
<dbReference type="PDBsum" id="8S8H"/>
<dbReference type="PDBsum" id="8S8I"/>
<dbReference type="PDBsum" id="8S8J"/>
<dbReference type="PDBsum" id="8S8K"/>
<dbReference type="EMDB" id="EMD-0057"/>
<dbReference type="EMDB" id="EMD-0058"/>
<dbReference type="EMDB" id="EMD-19541"/>
<dbReference type="EMDB" id="EMD-19801"/>
<dbReference type="EMDB" id="EMD-19802"/>
<dbReference type="EMDB" id="EMD-19803"/>
<dbReference type="EMDB" id="EMD-19804"/>
<dbReference type="EMDB" id="EMD-19805"/>
<dbReference type="EMDB" id="EMD-19806"/>
<dbReference type="EMDB" id="EMD-19807"/>
<dbReference type="EMDB" id="EMD-19808"/>
<dbReference type="EMDB" id="EMD-2763"/>
<dbReference type="EMDB" id="EMD-3048"/>
<dbReference type="EMDB" id="EMD-3050"/>
<dbReference type="EMDB" id="EMD-4327"/>
<dbReference type="EMDB" id="EMD-4328"/>
<dbReference type="EMDB" id="EMD-4404"/>
<dbReference type="EMDB" id="EMD-4428"/>
<dbReference type="EMDB" id="EMD-4543"/>
<dbReference type="EMDB" id="EMD-4544"/>
<dbReference type="EMDB" id="EMD-4545"/>
<dbReference type="EMDB" id="EMD-4546"/>
<dbReference type="EMDB" id="EMD-4547"/>
<dbReference type="EMDB" id="EMD-4548"/>
<dbReference type="SMR" id="P09064"/>
<dbReference type="BioGRID" id="35925">
    <property type="interactions" value="188"/>
</dbReference>
<dbReference type="ComplexPortal" id="CPX-427">
    <property type="entry name" value="Eukaryotic translation initiation factor 2 complex"/>
</dbReference>
<dbReference type="DIP" id="DIP-2310N"/>
<dbReference type="FunCoup" id="P09064">
    <property type="interactions" value="1403"/>
</dbReference>
<dbReference type="IntAct" id="P09064">
    <property type="interactions" value="30"/>
</dbReference>
<dbReference type="MINT" id="P09064"/>
<dbReference type="STRING" id="4932.YPL237W"/>
<dbReference type="iPTMnet" id="P09064"/>
<dbReference type="PaxDb" id="4932-YPL237W"/>
<dbReference type="PeptideAtlas" id="P09064"/>
<dbReference type="EnsemblFungi" id="YPL237W_mRNA">
    <property type="protein sequence ID" value="YPL237W"/>
    <property type="gene ID" value="YPL237W"/>
</dbReference>
<dbReference type="GeneID" id="855838"/>
<dbReference type="KEGG" id="sce:YPL237W"/>
<dbReference type="AGR" id="SGD:S000006158"/>
<dbReference type="SGD" id="S000006158">
    <property type="gene designation" value="SUI3"/>
</dbReference>
<dbReference type="VEuPathDB" id="FungiDB:YPL237W"/>
<dbReference type="eggNOG" id="KOG2768">
    <property type="taxonomic scope" value="Eukaryota"/>
</dbReference>
<dbReference type="GeneTree" id="ENSGT00390000001804"/>
<dbReference type="HOGENOM" id="CLU_026663_0_3_1"/>
<dbReference type="InParanoid" id="P09064"/>
<dbReference type="OMA" id="CMREGNK"/>
<dbReference type="OrthoDB" id="10255414at2759"/>
<dbReference type="BioCyc" id="YEAST:G3O-34124-MONOMER"/>
<dbReference type="Reactome" id="R-SCE-156827">
    <property type="pathway name" value="L13a-mediated translational silencing of Ceruloplasmin expression"/>
</dbReference>
<dbReference type="Reactome" id="R-SCE-382556">
    <property type="pathway name" value="ABC-family proteins mediated transport"/>
</dbReference>
<dbReference type="Reactome" id="R-SCE-72649">
    <property type="pathway name" value="Translation initiation complex formation"/>
</dbReference>
<dbReference type="Reactome" id="R-SCE-72695">
    <property type="pathway name" value="Formation of the ternary complex, and subsequently, the 43S complex"/>
</dbReference>
<dbReference type="Reactome" id="R-SCE-72702">
    <property type="pathway name" value="Ribosomal scanning and start codon recognition"/>
</dbReference>
<dbReference type="Reactome" id="R-SCE-72731">
    <property type="pathway name" value="Recycling of eIF2:GDP"/>
</dbReference>
<dbReference type="Reactome" id="R-SCE-9840373">
    <property type="pathway name" value="Cellular response to mitochondrial stress"/>
</dbReference>
<dbReference type="BioGRID-ORCS" id="855838">
    <property type="hits" value="0 hits in 10 CRISPR screens"/>
</dbReference>
<dbReference type="EvolutionaryTrace" id="P09064"/>
<dbReference type="PRO" id="PR:P09064"/>
<dbReference type="Proteomes" id="UP000002311">
    <property type="component" value="Chromosome XVI"/>
</dbReference>
<dbReference type="RNAct" id="P09064">
    <property type="molecule type" value="protein"/>
</dbReference>
<dbReference type="GO" id="GO:0005829">
    <property type="term" value="C:cytosol"/>
    <property type="evidence" value="ECO:0000304"/>
    <property type="project" value="Reactome"/>
</dbReference>
<dbReference type="GO" id="GO:0016282">
    <property type="term" value="C:eukaryotic 43S preinitiation complex"/>
    <property type="evidence" value="ECO:0000314"/>
    <property type="project" value="SGD"/>
</dbReference>
<dbReference type="GO" id="GO:0005850">
    <property type="term" value="C:eukaryotic translation initiation factor 2 complex"/>
    <property type="evidence" value="ECO:0000314"/>
    <property type="project" value="SGD"/>
</dbReference>
<dbReference type="GO" id="GO:0043614">
    <property type="term" value="C:multi-eIF complex"/>
    <property type="evidence" value="ECO:0000314"/>
    <property type="project" value="SGD"/>
</dbReference>
<dbReference type="GO" id="GO:0005840">
    <property type="term" value="C:ribosome"/>
    <property type="evidence" value="ECO:0000314"/>
    <property type="project" value="ComplexPortal"/>
</dbReference>
<dbReference type="GO" id="GO:0003729">
    <property type="term" value="F:mRNA binding"/>
    <property type="evidence" value="ECO:0000314"/>
    <property type="project" value="SGD"/>
</dbReference>
<dbReference type="GO" id="GO:0003743">
    <property type="term" value="F:translation initiation factor activity"/>
    <property type="evidence" value="ECO:0000315"/>
    <property type="project" value="SGD"/>
</dbReference>
<dbReference type="GO" id="GO:0031369">
    <property type="term" value="F:translation initiation factor binding"/>
    <property type="evidence" value="ECO:0000314"/>
    <property type="project" value="SGD"/>
</dbReference>
<dbReference type="GO" id="GO:0008270">
    <property type="term" value="F:zinc ion binding"/>
    <property type="evidence" value="ECO:0007669"/>
    <property type="project" value="UniProtKB-KW"/>
</dbReference>
<dbReference type="GO" id="GO:0001731">
    <property type="term" value="P:formation of translation preinitiation complex"/>
    <property type="evidence" value="ECO:0000314"/>
    <property type="project" value="SGD"/>
</dbReference>
<dbReference type="GO" id="GO:0006413">
    <property type="term" value="P:translational initiation"/>
    <property type="evidence" value="ECO:0000314"/>
    <property type="project" value="ComplexPortal"/>
</dbReference>
<dbReference type="FunFam" id="3.30.30.170:FF:000001">
    <property type="entry name" value="Eukaryotic translation initiation factor 2 subunit"/>
    <property type="match status" value="1"/>
</dbReference>
<dbReference type="Gene3D" id="3.30.30.170">
    <property type="match status" value="1"/>
</dbReference>
<dbReference type="InterPro" id="IPR045196">
    <property type="entry name" value="IF2/IF5"/>
</dbReference>
<dbReference type="InterPro" id="IPR002735">
    <property type="entry name" value="Transl_init_fac_IF2/IF5_dom"/>
</dbReference>
<dbReference type="InterPro" id="IPR016189">
    <property type="entry name" value="Transl_init_fac_IF2/IF5_N"/>
</dbReference>
<dbReference type="InterPro" id="IPR016190">
    <property type="entry name" value="Transl_init_fac_IF2/IF5_Zn-bd"/>
</dbReference>
<dbReference type="PANTHER" id="PTHR23001">
    <property type="entry name" value="EUKARYOTIC TRANSLATION INITIATION FACTOR"/>
    <property type="match status" value="1"/>
</dbReference>
<dbReference type="PANTHER" id="PTHR23001:SF3">
    <property type="entry name" value="EUKARYOTIC TRANSLATION INITIATION FACTOR 2 SUBUNIT 2"/>
    <property type="match status" value="1"/>
</dbReference>
<dbReference type="Pfam" id="PF01873">
    <property type="entry name" value="eIF-5_eIF-2B"/>
    <property type="match status" value="1"/>
</dbReference>
<dbReference type="SMART" id="SM00653">
    <property type="entry name" value="eIF2B_5"/>
    <property type="match status" value="1"/>
</dbReference>
<dbReference type="SUPFAM" id="SSF100966">
    <property type="entry name" value="Translation initiation factor 2 beta, aIF2beta, N-terminal domain"/>
    <property type="match status" value="1"/>
</dbReference>
<dbReference type="SUPFAM" id="SSF75689">
    <property type="entry name" value="Zinc-binding domain of translation initiation factor 2 beta"/>
    <property type="match status" value="1"/>
</dbReference>
<evidence type="ECO:0000250" key="1">
    <source>
        <dbReference type="UniProtKB" id="P56329"/>
    </source>
</evidence>
<evidence type="ECO:0000255" key="2"/>
<evidence type="ECO:0000256" key="3">
    <source>
        <dbReference type="SAM" id="MobiDB-lite"/>
    </source>
</evidence>
<evidence type="ECO:0000269" key="4">
    <source>
    </source>
</evidence>
<evidence type="ECO:0000269" key="5">
    <source>
    </source>
</evidence>
<evidence type="ECO:0000269" key="6">
    <source>
    </source>
</evidence>
<evidence type="ECO:0000269" key="7">
    <source>
    </source>
</evidence>
<evidence type="ECO:0000269" key="8">
    <source>
    </source>
</evidence>
<evidence type="ECO:0000305" key="9"/>
<evidence type="ECO:0007744" key="10">
    <source>
    </source>
</evidence>
<evidence type="ECO:0007744" key="11">
    <source>
    </source>
</evidence>
<evidence type="ECO:0007744" key="12">
    <source>
    </source>
</evidence>
<evidence type="ECO:0007829" key="13">
    <source>
        <dbReference type="PDB" id="8CAS"/>
    </source>
</evidence>
<gene>
    <name type="primary">SUI3</name>
    <name type="synonym">TIF212</name>
    <name type="ordered locus">YPL237W</name>
</gene>
<name>IF2B_YEAST</name>
<protein>
    <recommendedName>
        <fullName>Eukaryotic translation initiation factor 2 subunit beta</fullName>
        <shortName>eIF2-beta</shortName>
    </recommendedName>
</protein>
<organism>
    <name type="scientific">Saccharomyces cerevisiae (strain ATCC 204508 / S288c)</name>
    <name type="common">Baker's yeast</name>
    <dbReference type="NCBI Taxonomy" id="559292"/>
    <lineage>
        <taxon>Eukaryota</taxon>
        <taxon>Fungi</taxon>
        <taxon>Dikarya</taxon>
        <taxon>Ascomycota</taxon>
        <taxon>Saccharomycotina</taxon>
        <taxon>Saccharomycetes</taxon>
        <taxon>Saccharomycetales</taxon>
        <taxon>Saccharomycetaceae</taxon>
        <taxon>Saccharomyces</taxon>
    </lineage>
</organism>
<sequence>MSSDLAAELGFDPALKKKKKTKKVIPDDFDAAVNGKENGSGDDLFAGLKKKKKKSKSVSADAEAEKEPTDDIAEALGELSLKKKKKKTKDSSVDAFEKELAKAGLDNVDAESKEGTPSANSSIQQEVGLPYSELLSRFFNILRTNNPELAGDRSGPKFRIPPPVCLRDGKKTIFSNIQDIAEKLHRSPEHLIQYLFAELGTSGSVDGQKRLVIKGKFQSKQMENVLRRYILEYVTCKTCKSINTELKREQSNRLFFMVCKSCGSTRSVSSIKTGFQATVGKRRRM</sequence>
<accession>P09064</accession>
<accession>D6W3D3</accession>
<accession>Q6B200</accession>